<keyword id="KW-0150">Chloroplast</keyword>
<keyword id="KW-0934">Plastid</keyword>
<keyword id="KW-0687">Ribonucleoprotein</keyword>
<keyword id="KW-0689">Ribosomal protein</keyword>
<organism>
    <name type="scientific">Thalassiosira weissflogii</name>
    <name type="common">Marine diatom</name>
    <dbReference type="NCBI Taxonomy" id="1577725"/>
    <lineage>
        <taxon>Eukaryota</taxon>
        <taxon>Sar</taxon>
        <taxon>Stramenopiles</taxon>
        <taxon>Ochrophyta</taxon>
        <taxon>Bacillariophyta</taxon>
        <taxon>Coscinodiscophyceae</taxon>
        <taxon>Thalassiosirophycidae</taxon>
        <taxon>Thalassiosirales</taxon>
        <taxon>Thalassiosiraceae</taxon>
        <taxon>Conticribra</taxon>
    </lineage>
</organism>
<sequence length="120" mass="13849">MLNLDNQKAIDNLHKNFIKPNLPKIQIGDTVKLGVKIIEGNKERVQFYEGTVIAKKNSSINTTITVRKVLQGIGIERIFLIHSPKIASIEVLRHSKVRRSKLYYLRNLRGKASRLKQRFE</sequence>
<gene>
    <name evidence="1" type="primary">rpl19</name>
</gene>
<reference key="1">
    <citation type="journal article" date="1998" name="Eur. J. Phycol.">
        <title>The petF region of the chloroplast genome from the diatom Thalassiosira weissflogii: sequence, organization and phylogeny.</title>
        <authorList>
            <person name="Gueneau P."/>
            <person name="Morel F."/>
            <person name="Laroche J."/>
            <person name="Erdner D."/>
        </authorList>
    </citation>
    <scope>NUCLEOTIDE SEQUENCE [GENOMIC DNA]</scope>
</reference>
<comment type="subcellular location">
    <subcellularLocation>
        <location>Plastid</location>
        <location>Chloroplast</location>
    </subcellularLocation>
</comment>
<comment type="similarity">
    <text evidence="1">Belongs to the bacterial ribosomal protein bL19 family.</text>
</comment>
<dbReference type="EMBL" id="AF049491">
    <property type="protein sequence ID" value="AAD12751.1"/>
    <property type="molecule type" value="Genomic_DNA"/>
</dbReference>
<dbReference type="RefSeq" id="YP_009093410.1">
    <property type="nucleotide sequence ID" value="NC_025314.1"/>
</dbReference>
<dbReference type="SMR" id="O98449"/>
<dbReference type="GeneID" id="20834170"/>
<dbReference type="GO" id="GO:0009507">
    <property type="term" value="C:chloroplast"/>
    <property type="evidence" value="ECO:0007669"/>
    <property type="project" value="UniProtKB-SubCell"/>
</dbReference>
<dbReference type="GO" id="GO:0005762">
    <property type="term" value="C:mitochondrial large ribosomal subunit"/>
    <property type="evidence" value="ECO:0007669"/>
    <property type="project" value="TreeGrafter"/>
</dbReference>
<dbReference type="GO" id="GO:0003735">
    <property type="term" value="F:structural constituent of ribosome"/>
    <property type="evidence" value="ECO:0007669"/>
    <property type="project" value="InterPro"/>
</dbReference>
<dbReference type="GO" id="GO:0006412">
    <property type="term" value="P:translation"/>
    <property type="evidence" value="ECO:0007669"/>
    <property type="project" value="UniProtKB-UniRule"/>
</dbReference>
<dbReference type="FunFam" id="2.30.30.790:FF:000004">
    <property type="entry name" value="50S ribosomal protein L19, chloroplastic"/>
    <property type="match status" value="1"/>
</dbReference>
<dbReference type="Gene3D" id="2.30.30.790">
    <property type="match status" value="1"/>
</dbReference>
<dbReference type="HAMAP" id="MF_00402">
    <property type="entry name" value="Ribosomal_bL19"/>
    <property type="match status" value="1"/>
</dbReference>
<dbReference type="InterPro" id="IPR001857">
    <property type="entry name" value="Ribosomal_bL19"/>
</dbReference>
<dbReference type="InterPro" id="IPR018257">
    <property type="entry name" value="Ribosomal_bL19_CS"/>
</dbReference>
<dbReference type="InterPro" id="IPR038657">
    <property type="entry name" value="Ribosomal_bL19_sf"/>
</dbReference>
<dbReference type="InterPro" id="IPR008991">
    <property type="entry name" value="Translation_prot_SH3-like_sf"/>
</dbReference>
<dbReference type="NCBIfam" id="TIGR01024">
    <property type="entry name" value="rplS_bact"/>
    <property type="match status" value="1"/>
</dbReference>
<dbReference type="PANTHER" id="PTHR15680:SF9">
    <property type="entry name" value="LARGE RIBOSOMAL SUBUNIT PROTEIN BL19M"/>
    <property type="match status" value="1"/>
</dbReference>
<dbReference type="PANTHER" id="PTHR15680">
    <property type="entry name" value="RIBOSOMAL PROTEIN L19"/>
    <property type="match status" value="1"/>
</dbReference>
<dbReference type="Pfam" id="PF01245">
    <property type="entry name" value="Ribosomal_L19"/>
    <property type="match status" value="1"/>
</dbReference>
<dbReference type="PIRSF" id="PIRSF002191">
    <property type="entry name" value="Ribosomal_L19"/>
    <property type="match status" value="1"/>
</dbReference>
<dbReference type="PRINTS" id="PR00061">
    <property type="entry name" value="RIBOSOMALL19"/>
</dbReference>
<dbReference type="SUPFAM" id="SSF50104">
    <property type="entry name" value="Translation proteins SH3-like domain"/>
    <property type="match status" value="1"/>
</dbReference>
<dbReference type="PROSITE" id="PS01015">
    <property type="entry name" value="RIBOSOMAL_L19"/>
    <property type="match status" value="1"/>
</dbReference>
<proteinExistence type="inferred from homology"/>
<accession>O98449</accession>
<feature type="chain" id="PRO_0000163589" description="Large ribosomal subunit protein bL19c">
    <location>
        <begin position="1"/>
        <end position="120"/>
    </location>
</feature>
<evidence type="ECO:0000255" key="1">
    <source>
        <dbReference type="HAMAP-Rule" id="MF_00402"/>
    </source>
</evidence>
<evidence type="ECO:0000305" key="2"/>
<name>RK19_THAWE</name>
<protein>
    <recommendedName>
        <fullName evidence="1">Large ribosomal subunit protein bL19c</fullName>
    </recommendedName>
    <alternativeName>
        <fullName evidence="2">50S ribosomal protein L19, chloroplastic</fullName>
    </alternativeName>
</protein>
<geneLocation type="chloroplast"/>